<protein>
    <recommendedName>
        <fullName evidence="5">Large ribosomal subunit protein mL53</fullName>
    </recommendedName>
    <alternativeName>
        <fullName>39S ribosomal protein L53, mitochondrial</fullName>
        <shortName>L53mt</shortName>
        <shortName>MRP-L53</shortName>
    </alternativeName>
</protein>
<keyword id="KW-0002">3D-structure</keyword>
<keyword id="KW-0496">Mitochondrion</keyword>
<keyword id="KW-1267">Proteomics identification</keyword>
<keyword id="KW-1185">Reference proteome</keyword>
<keyword id="KW-0687">Ribonucleoprotein</keyword>
<keyword id="KW-0689">Ribosomal protein</keyword>
<keyword id="KW-0809">Transit peptide</keyword>
<name>RM53_HUMAN</name>
<organism>
    <name type="scientific">Homo sapiens</name>
    <name type="common">Human</name>
    <dbReference type="NCBI Taxonomy" id="9606"/>
    <lineage>
        <taxon>Eukaryota</taxon>
        <taxon>Metazoa</taxon>
        <taxon>Chordata</taxon>
        <taxon>Craniata</taxon>
        <taxon>Vertebrata</taxon>
        <taxon>Euteleostomi</taxon>
        <taxon>Mammalia</taxon>
        <taxon>Eutheria</taxon>
        <taxon>Euarchontoglires</taxon>
        <taxon>Primates</taxon>
        <taxon>Haplorrhini</taxon>
        <taxon>Catarrhini</taxon>
        <taxon>Hominidae</taxon>
        <taxon>Homo</taxon>
    </lineage>
</organism>
<accession>Q96EL3</accession>
<feature type="transit peptide" description="Mitochondrion" evidence="1">
    <location>
        <begin position="1"/>
        <end status="unknown"/>
    </location>
</feature>
<feature type="chain" id="PRO_0000261664" description="Large ribosomal subunit protein mL53">
    <location>
        <begin status="unknown"/>
        <end position="112"/>
    </location>
</feature>
<feature type="sequence variant" id="VAR_029475" description="In dbSNP:rs1047911.">
    <original>A</original>
    <variation>S</variation>
    <location>
        <position position="4"/>
    </location>
</feature>
<feature type="strand" evidence="12">
    <location>
        <begin position="15"/>
        <end position="19"/>
    </location>
</feature>
<feature type="strand" evidence="13">
    <location>
        <begin position="22"/>
        <end position="25"/>
    </location>
</feature>
<feature type="helix" evidence="12">
    <location>
        <begin position="28"/>
        <end position="36"/>
    </location>
</feature>
<feature type="helix" evidence="12">
    <location>
        <begin position="40"/>
        <end position="43"/>
    </location>
</feature>
<feature type="strand" evidence="12">
    <location>
        <begin position="50"/>
        <end position="53"/>
    </location>
</feature>
<feature type="strand" evidence="11">
    <location>
        <begin position="59"/>
        <end position="61"/>
    </location>
</feature>
<feature type="strand" evidence="12">
    <location>
        <begin position="63"/>
        <end position="68"/>
    </location>
</feature>
<feature type="turn" evidence="12">
    <location>
        <begin position="69"/>
        <end position="71"/>
    </location>
</feature>
<feature type="strand" evidence="12">
    <location>
        <begin position="72"/>
        <end position="76"/>
    </location>
</feature>
<feature type="strand" evidence="11">
    <location>
        <begin position="79"/>
        <end position="81"/>
    </location>
</feature>
<feature type="helix" evidence="12">
    <location>
        <begin position="83"/>
        <end position="95"/>
    </location>
</feature>
<reference key="1">
    <citation type="journal article" date="2004" name="Genome Res.">
        <title>The status, quality, and expansion of the NIH full-length cDNA project: the Mammalian Gene Collection (MGC).</title>
        <authorList>
            <consortium name="The MGC Project Team"/>
        </authorList>
    </citation>
    <scope>NUCLEOTIDE SEQUENCE [LARGE SCALE MRNA]</scope>
    <source>
        <tissue>Skin</tissue>
    </source>
</reference>
<reference key="2">
    <citation type="journal article" date="2011" name="BMC Syst. Biol.">
        <title>Initial characterization of the human central proteome.</title>
        <authorList>
            <person name="Burkard T.R."/>
            <person name="Planyavsky M."/>
            <person name="Kaupe I."/>
            <person name="Breitwieser F.P."/>
            <person name="Buerckstuemmer T."/>
            <person name="Bennett K.L."/>
            <person name="Superti-Furga G."/>
            <person name="Colinge J."/>
        </authorList>
    </citation>
    <scope>IDENTIFICATION BY MASS SPECTROMETRY [LARGE SCALE ANALYSIS]</scope>
</reference>
<reference key="3">
    <citation type="journal article" date="2015" name="Proteomics">
        <title>N-terminome analysis of the human mitochondrial proteome.</title>
        <authorList>
            <person name="Vaca Jacome A.S."/>
            <person name="Rabilloud T."/>
            <person name="Schaeffer-Reiss C."/>
            <person name="Rompais M."/>
            <person name="Ayoub D."/>
            <person name="Lane L."/>
            <person name="Bairoch A."/>
            <person name="Van Dorsselaer A."/>
            <person name="Carapito C."/>
        </authorList>
    </citation>
    <scope>IDENTIFICATION BY MASS SPECTROMETRY [LARGE SCALE ANALYSIS]</scope>
</reference>
<reference evidence="7" key="4">
    <citation type="journal article" date="2014" name="Science">
        <title>Structure of the large ribosomal subunit from human mitochondria.</title>
        <authorList>
            <person name="Brown A."/>
            <person name="Amunts A."/>
            <person name="Bai X.C."/>
            <person name="Sugimoto Y."/>
            <person name="Edwards P.C."/>
            <person name="Murshudov G."/>
            <person name="Scheres S.H."/>
            <person name="Ramakrishnan V."/>
        </authorList>
    </citation>
    <scope>STRUCTURE BY ELECTRON MICROSCOPY (3.40 ANGSTROMS)</scope>
    <scope>SUBCELLULAR LOCATION</scope>
    <scope>SUBUNIT</scope>
</reference>
<reference evidence="8" key="5">
    <citation type="journal article" date="2015" name="Science">
        <title>Ribosome. The structure of the human mitochondrial ribosome.</title>
        <authorList>
            <person name="Amunts A."/>
            <person name="Brown A."/>
            <person name="Toots J."/>
            <person name="Scheres S.H."/>
            <person name="Ramakrishnan V."/>
        </authorList>
    </citation>
    <scope>STRUCTURE BY ELECTRON MICROSCOPY (3.50 ANGSTROMS)</scope>
    <scope>SUBCELLULAR LOCATION</scope>
    <scope>SUBUNIT</scope>
</reference>
<reference evidence="9 10" key="6">
    <citation type="journal article" date="2017" name="Nat. Struct. Mol. Biol.">
        <title>Structures of the human mitochondrial ribosome in native states of assembly.</title>
        <authorList>
            <person name="Brown A."/>
            <person name="Rathore S."/>
            <person name="Kimanius D."/>
            <person name="Aibara S."/>
            <person name="Bai X.C."/>
            <person name="Rorbach J."/>
            <person name="Amunts A."/>
            <person name="Ramakrishnan V."/>
        </authorList>
    </citation>
    <scope>STRUCTURE BY ELECTRON MICROSCOPY (3.03 ANGSTROMS)</scope>
    <scope>SUBCELLULAR LOCATION</scope>
    <scope>SUBUNIT</scope>
</reference>
<evidence type="ECO:0000255" key="1"/>
<evidence type="ECO:0000269" key="2">
    <source>
    </source>
</evidence>
<evidence type="ECO:0000269" key="3">
    <source>
    </source>
</evidence>
<evidence type="ECO:0000269" key="4">
    <source>
    </source>
</evidence>
<evidence type="ECO:0000303" key="5">
    <source>
    </source>
</evidence>
<evidence type="ECO:0000305" key="6"/>
<evidence type="ECO:0007744" key="7">
    <source>
        <dbReference type="PDB" id="3J7Y"/>
    </source>
</evidence>
<evidence type="ECO:0007744" key="8">
    <source>
        <dbReference type="PDB" id="3J9M"/>
    </source>
</evidence>
<evidence type="ECO:0007744" key="9">
    <source>
        <dbReference type="PDB" id="5OOL"/>
    </source>
</evidence>
<evidence type="ECO:0007744" key="10">
    <source>
        <dbReference type="PDB" id="5OOM"/>
    </source>
</evidence>
<evidence type="ECO:0007829" key="11">
    <source>
        <dbReference type="PDB" id="3J7Y"/>
    </source>
</evidence>
<evidence type="ECO:0007829" key="12">
    <source>
        <dbReference type="PDB" id="7OF0"/>
    </source>
</evidence>
<evidence type="ECO:0007829" key="13">
    <source>
        <dbReference type="PDB" id="8QU5"/>
    </source>
</evidence>
<dbReference type="EMBL" id="BC012163">
    <property type="protein sequence ID" value="AAH12163.1"/>
    <property type="molecule type" value="mRNA"/>
</dbReference>
<dbReference type="CCDS" id="CCDS1944.1"/>
<dbReference type="RefSeq" id="NP_444278.1">
    <property type="nucleotide sequence ID" value="NM_053050.5"/>
</dbReference>
<dbReference type="PDB" id="3J7Y">
    <property type="method" value="EM"/>
    <property type="resolution" value="3.40 A"/>
    <property type="chains" value="k=1-112"/>
</dbReference>
<dbReference type="PDB" id="3J9M">
    <property type="method" value="EM"/>
    <property type="resolution" value="3.50 A"/>
    <property type="chains" value="k=1-112"/>
</dbReference>
<dbReference type="PDB" id="5OOL">
    <property type="method" value="EM"/>
    <property type="resolution" value="3.06 A"/>
    <property type="chains" value="k=1-112"/>
</dbReference>
<dbReference type="PDB" id="5OOM">
    <property type="method" value="EM"/>
    <property type="resolution" value="3.03 A"/>
    <property type="chains" value="k=1-112"/>
</dbReference>
<dbReference type="PDB" id="6I9R">
    <property type="method" value="EM"/>
    <property type="resolution" value="3.90 A"/>
    <property type="chains" value="k=1-112"/>
</dbReference>
<dbReference type="PDB" id="6NU2">
    <property type="method" value="EM"/>
    <property type="resolution" value="3.90 A"/>
    <property type="chains" value="k=13-96"/>
</dbReference>
<dbReference type="PDB" id="6NU3">
    <property type="method" value="EM"/>
    <property type="resolution" value="4.40 A"/>
    <property type="chains" value="k=1-112"/>
</dbReference>
<dbReference type="PDB" id="6VLZ">
    <property type="method" value="EM"/>
    <property type="resolution" value="2.97 A"/>
    <property type="chains" value="k=1-112"/>
</dbReference>
<dbReference type="PDB" id="6VMI">
    <property type="method" value="EM"/>
    <property type="resolution" value="2.96 A"/>
    <property type="chains" value="k=1-112"/>
</dbReference>
<dbReference type="PDB" id="6ZM5">
    <property type="method" value="EM"/>
    <property type="resolution" value="2.89 A"/>
    <property type="chains" value="k=2-112"/>
</dbReference>
<dbReference type="PDB" id="6ZM6">
    <property type="method" value="EM"/>
    <property type="resolution" value="2.59 A"/>
    <property type="chains" value="k=2-112"/>
</dbReference>
<dbReference type="PDB" id="6ZS9">
    <property type="method" value="EM"/>
    <property type="resolution" value="4.00 A"/>
    <property type="chains" value="k=1-112"/>
</dbReference>
<dbReference type="PDB" id="6ZSA">
    <property type="method" value="EM"/>
    <property type="resolution" value="4.00 A"/>
    <property type="chains" value="k=1-112"/>
</dbReference>
<dbReference type="PDB" id="6ZSB">
    <property type="method" value="EM"/>
    <property type="resolution" value="4.50 A"/>
    <property type="chains" value="k=1-112"/>
</dbReference>
<dbReference type="PDB" id="6ZSC">
    <property type="method" value="EM"/>
    <property type="resolution" value="3.50 A"/>
    <property type="chains" value="k=1-112"/>
</dbReference>
<dbReference type="PDB" id="6ZSD">
    <property type="method" value="EM"/>
    <property type="resolution" value="3.70 A"/>
    <property type="chains" value="k=1-112"/>
</dbReference>
<dbReference type="PDB" id="6ZSE">
    <property type="method" value="EM"/>
    <property type="resolution" value="5.00 A"/>
    <property type="chains" value="k=1-112"/>
</dbReference>
<dbReference type="PDB" id="6ZSG">
    <property type="method" value="EM"/>
    <property type="resolution" value="4.00 A"/>
    <property type="chains" value="k=1-112"/>
</dbReference>
<dbReference type="PDB" id="7A5F">
    <property type="method" value="EM"/>
    <property type="resolution" value="4.40 A"/>
    <property type="chains" value="k3=1-112"/>
</dbReference>
<dbReference type="PDB" id="7A5G">
    <property type="method" value="EM"/>
    <property type="resolution" value="4.33 A"/>
    <property type="chains" value="k3=1-112"/>
</dbReference>
<dbReference type="PDB" id="7A5H">
    <property type="method" value="EM"/>
    <property type="resolution" value="3.30 A"/>
    <property type="chains" value="k=1-112"/>
</dbReference>
<dbReference type="PDB" id="7A5I">
    <property type="method" value="EM"/>
    <property type="resolution" value="3.70 A"/>
    <property type="chains" value="k3=1-112"/>
</dbReference>
<dbReference type="PDB" id="7A5J">
    <property type="method" value="EM"/>
    <property type="resolution" value="3.10 A"/>
    <property type="chains" value="k=1-112"/>
</dbReference>
<dbReference type="PDB" id="7A5K">
    <property type="method" value="EM"/>
    <property type="resolution" value="3.70 A"/>
    <property type="chains" value="k3=1-112"/>
</dbReference>
<dbReference type="PDB" id="7L08">
    <property type="method" value="EM"/>
    <property type="resolution" value="3.49 A"/>
    <property type="chains" value="k=1-112"/>
</dbReference>
<dbReference type="PDB" id="7L20">
    <property type="method" value="EM"/>
    <property type="resolution" value="3.15 A"/>
    <property type="chains" value="k=1-112"/>
</dbReference>
<dbReference type="PDB" id="7O9K">
    <property type="method" value="EM"/>
    <property type="resolution" value="3.10 A"/>
    <property type="chains" value="k=1-112"/>
</dbReference>
<dbReference type="PDB" id="7O9M">
    <property type="method" value="EM"/>
    <property type="resolution" value="2.50 A"/>
    <property type="chains" value="k=1-112"/>
</dbReference>
<dbReference type="PDB" id="7ODR">
    <property type="method" value="EM"/>
    <property type="resolution" value="2.90 A"/>
    <property type="chains" value="k=1-112"/>
</dbReference>
<dbReference type="PDB" id="7ODS">
    <property type="method" value="EM"/>
    <property type="resolution" value="3.10 A"/>
    <property type="chains" value="k=1-112"/>
</dbReference>
<dbReference type="PDB" id="7ODT">
    <property type="method" value="EM"/>
    <property type="resolution" value="3.10 A"/>
    <property type="chains" value="k=1-112"/>
</dbReference>
<dbReference type="PDB" id="7OF0">
    <property type="method" value="EM"/>
    <property type="resolution" value="2.20 A"/>
    <property type="chains" value="k=1-112"/>
</dbReference>
<dbReference type="PDB" id="7OF2">
    <property type="method" value="EM"/>
    <property type="resolution" value="2.70 A"/>
    <property type="chains" value="k=1-112"/>
</dbReference>
<dbReference type="PDB" id="7OF3">
    <property type="method" value="EM"/>
    <property type="resolution" value="2.70 A"/>
    <property type="chains" value="k=1-112"/>
</dbReference>
<dbReference type="PDB" id="7OF4">
    <property type="method" value="EM"/>
    <property type="resolution" value="2.70 A"/>
    <property type="chains" value="k=1-112"/>
</dbReference>
<dbReference type="PDB" id="7OF5">
    <property type="method" value="EM"/>
    <property type="resolution" value="2.90 A"/>
    <property type="chains" value="k=1-112"/>
</dbReference>
<dbReference type="PDB" id="7OF6">
    <property type="method" value="EM"/>
    <property type="resolution" value="2.60 A"/>
    <property type="chains" value="k=1-112"/>
</dbReference>
<dbReference type="PDB" id="7OF7">
    <property type="method" value="EM"/>
    <property type="resolution" value="2.50 A"/>
    <property type="chains" value="k=1-112"/>
</dbReference>
<dbReference type="PDB" id="7OG4">
    <property type="method" value="EM"/>
    <property type="resolution" value="3.80 A"/>
    <property type="chains" value="k=1-112"/>
</dbReference>
<dbReference type="PDB" id="7OI6">
    <property type="method" value="EM"/>
    <property type="resolution" value="5.70 A"/>
    <property type="chains" value="k=1-112"/>
</dbReference>
<dbReference type="PDB" id="7OI7">
    <property type="method" value="EM"/>
    <property type="resolution" value="3.50 A"/>
    <property type="chains" value="k=1-112"/>
</dbReference>
<dbReference type="PDB" id="7OI8">
    <property type="method" value="EM"/>
    <property type="resolution" value="3.50 A"/>
    <property type="chains" value="k=1-112"/>
</dbReference>
<dbReference type="PDB" id="7OI9">
    <property type="method" value="EM"/>
    <property type="resolution" value="3.30 A"/>
    <property type="chains" value="k=1-112"/>
</dbReference>
<dbReference type="PDB" id="7OIA">
    <property type="method" value="EM"/>
    <property type="resolution" value="3.20 A"/>
    <property type="chains" value="k=1-112"/>
</dbReference>
<dbReference type="PDB" id="7OIB">
    <property type="method" value="EM"/>
    <property type="resolution" value="3.30 A"/>
    <property type="chains" value="k=1-112"/>
</dbReference>
<dbReference type="PDB" id="7OIC">
    <property type="method" value="EM"/>
    <property type="resolution" value="3.10 A"/>
    <property type="chains" value="k=1-112"/>
</dbReference>
<dbReference type="PDB" id="7OID">
    <property type="method" value="EM"/>
    <property type="resolution" value="3.70 A"/>
    <property type="chains" value="k=1-112"/>
</dbReference>
<dbReference type="PDB" id="7OIE">
    <property type="method" value="EM"/>
    <property type="resolution" value="3.50 A"/>
    <property type="chains" value="k=1-112"/>
</dbReference>
<dbReference type="PDB" id="7PD3">
    <property type="method" value="EM"/>
    <property type="resolution" value="3.40 A"/>
    <property type="chains" value="k=1-112"/>
</dbReference>
<dbReference type="PDB" id="7PO4">
    <property type="method" value="EM"/>
    <property type="resolution" value="2.56 A"/>
    <property type="chains" value="k=2-112"/>
</dbReference>
<dbReference type="PDB" id="7QI4">
    <property type="method" value="EM"/>
    <property type="resolution" value="2.21 A"/>
    <property type="chains" value="k=1-112"/>
</dbReference>
<dbReference type="PDB" id="7QI5">
    <property type="method" value="EM"/>
    <property type="resolution" value="2.63 A"/>
    <property type="chains" value="k=1-112"/>
</dbReference>
<dbReference type="PDB" id="7QI6">
    <property type="method" value="EM"/>
    <property type="resolution" value="2.98 A"/>
    <property type="chains" value="k=1-112"/>
</dbReference>
<dbReference type="PDB" id="8ANY">
    <property type="method" value="EM"/>
    <property type="resolution" value="2.85 A"/>
    <property type="chains" value="k=1-112"/>
</dbReference>
<dbReference type="PDB" id="8K2A">
    <property type="method" value="EM"/>
    <property type="resolution" value="2.90 A"/>
    <property type="chains" value="L3=1-112"/>
</dbReference>
<dbReference type="PDB" id="8K2B">
    <property type="method" value="EM"/>
    <property type="resolution" value="3.40 A"/>
    <property type="chains" value="L3=1-112"/>
</dbReference>
<dbReference type="PDB" id="8OIR">
    <property type="method" value="EM"/>
    <property type="resolution" value="3.10 A"/>
    <property type="chains" value="Bb=1-112"/>
</dbReference>
<dbReference type="PDB" id="8OIT">
    <property type="method" value="EM"/>
    <property type="resolution" value="2.90 A"/>
    <property type="chains" value="Bb=1-112"/>
</dbReference>
<dbReference type="PDB" id="8PK0">
    <property type="method" value="EM"/>
    <property type="resolution" value="3.03 A"/>
    <property type="chains" value="k=1-112"/>
</dbReference>
<dbReference type="PDB" id="8QSJ">
    <property type="method" value="EM"/>
    <property type="resolution" value="3.00 A"/>
    <property type="chains" value="k=1-112"/>
</dbReference>
<dbReference type="PDB" id="8QU5">
    <property type="method" value="EM"/>
    <property type="resolution" value="2.42 A"/>
    <property type="chains" value="k=1-112"/>
</dbReference>
<dbReference type="PDB" id="8RRI">
    <property type="method" value="EM"/>
    <property type="resolution" value="2.40 A"/>
    <property type="chains" value="k=2-112"/>
</dbReference>
<dbReference type="PDB" id="8XT0">
    <property type="method" value="EM"/>
    <property type="resolution" value="3.20 A"/>
    <property type="chains" value="L3=1-112"/>
</dbReference>
<dbReference type="PDB" id="8XT1">
    <property type="method" value="EM"/>
    <property type="resolution" value="3.10 A"/>
    <property type="chains" value="L3=1-112"/>
</dbReference>
<dbReference type="PDB" id="8XT2">
    <property type="method" value="EM"/>
    <property type="resolution" value="3.30 A"/>
    <property type="chains" value="L3=1-112"/>
</dbReference>
<dbReference type="PDB" id="8XT3">
    <property type="method" value="EM"/>
    <property type="resolution" value="3.10 A"/>
    <property type="chains" value="L3=1-112"/>
</dbReference>
<dbReference type="PDBsum" id="3J7Y"/>
<dbReference type="PDBsum" id="3J9M"/>
<dbReference type="PDBsum" id="5OOL"/>
<dbReference type="PDBsum" id="5OOM"/>
<dbReference type="PDBsum" id="6I9R"/>
<dbReference type="PDBsum" id="6NU2"/>
<dbReference type="PDBsum" id="6NU3"/>
<dbReference type="PDBsum" id="6VLZ"/>
<dbReference type="PDBsum" id="6VMI"/>
<dbReference type="PDBsum" id="6ZM5"/>
<dbReference type="PDBsum" id="6ZM6"/>
<dbReference type="PDBsum" id="6ZS9"/>
<dbReference type="PDBsum" id="6ZSA"/>
<dbReference type="PDBsum" id="6ZSB"/>
<dbReference type="PDBsum" id="6ZSC"/>
<dbReference type="PDBsum" id="6ZSD"/>
<dbReference type="PDBsum" id="6ZSE"/>
<dbReference type="PDBsum" id="6ZSG"/>
<dbReference type="PDBsum" id="7A5F"/>
<dbReference type="PDBsum" id="7A5G"/>
<dbReference type="PDBsum" id="7A5H"/>
<dbReference type="PDBsum" id="7A5I"/>
<dbReference type="PDBsum" id="7A5J"/>
<dbReference type="PDBsum" id="7A5K"/>
<dbReference type="PDBsum" id="7L08"/>
<dbReference type="PDBsum" id="7L20"/>
<dbReference type="PDBsum" id="7O9K"/>
<dbReference type="PDBsum" id="7O9M"/>
<dbReference type="PDBsum" id="7ODR"/>
<dbReference type="PDBsum" id="7ODS"/>
<dbReference type="PDBsum" id="7ODT"/>
<dbReference type="PDBsum" id="7OF0"/>
<dbReference type="PDBsum" id="7OF2"/>
<dbReference type="PDBsum" id="7OF3"/>
<dbReference type="PDBsum" id="7OF4"/>
<dbReference type="PDBsum" id="7OF5"/>
<dbReference type="PDBsum" id="7OF6"/>
<dbReference type="PDBsum" id="7OF7"/>
<dbReference type="PDBsum" id="7OG4"/>
<dbReference type="PDBsum" id="7OI6"/>
<dbReference type="PDBsum" id="7OI7"/>
<dbReference type="PDBsum" id="7OI8"/>
<dbReference type="PDBsum" id="7OI9"/>
<dbReference type="PDBsum" id="7OIA"/>
<dbReference type="PDBsum" id="7OIB"/>
<dbReference type="PDBsum" id="7OIC"/>
<dbReference type="PDBsum" id="7OID"/>
<dbReference type="PDBsum" id="7OIE"/>
<dbReference type="PDBsum" id="7PD3"/>
<dbReference type="PDBsum" id="7PO4"/>
<dbReference type="PDBsum" id="7QI4"/>
<dbReference type="PDBsum" id="7QI5"/>
<dbReference type="PDBsum" id="7QI6"/>
<dbReference type="PDBsum" id="8ANY"/>
<dbReference type="PDBsum" id="8K2A"/>
<dbReference type="PDBsum" id="8K2B"/>
<dbReference type="PDBsum" id="8OIR"/>
<dbReference type="PDBsum" id="8OIT"/>
<dbReference type="PDBsum" id="8PK0"/>
<dbReference type="PDBsum" id="8QSJ"/>
<dbReference type="PDBsum" id="8QU5"/>
<dbReference type="PDBsum" id="8RRI"/>
<dbReference type="PDBsum" id="8XT0"/>
<dbReference type="PDBsum" id="8XT1"/>
<dbReference type="PDBsum" id="8XT2"/>
<dbReference type="PDBsum" id="8XT3"/>
<dbReference type="EMDB" id="EMD-0514"/>
<dbReference type="EMDB" id="EMD-0515"/>
<dbReference type="EMDB" id="EMD-11278"/>
<dbReference type="EMDB" id="EMD-11279"/>
<dbReference type="EMDB" id="EMD-11390"/>
<dbReference type="EMDB" id="EMD-11391"/>
<dbReference type="EMDB" id="EMD-11392"/>
<dbReference type="EMDB" id="EMD-11393"/>
<dbReference type="EMDB" id="EMD-11394"/>
<dbReference type="EMDB" id="EMD-11395"/>
<dbReference type="EMDB" id="EMD-11397"/>
<dbReference type="EMDB" id="EMD-11641"/>
<dbReference type="EMDB" id="EMD-11642"/>
<dbReference type="EMDB" id="EMD-11643"/>
<dbReference type="EMDB" id="EMD-11644"/>
<dbReference type="EMDB" id="EMD-11645"/>
<dbReference type="EMDB" id="EMD-11646"/>
<dbReference type="EMDB" id="EMD-12763"/>
<dbReference type="EMDB" id="EMD-12764"/>
<dbReference type="EMDB" id="EMD-12845"/>
<dbReference type="EMDB" id="EMD-12846"/>
<dbReference type="EMDB" id="EMD-12847"/>
<dbReference type="EMDB" id="EMD-12865"/>
<dbReference type="EMDB" id="EMD-12867"/>
<dbReference type="EMDB" id="EMD-12868"/>
<dbReference type="EMDB" id="EMD-12869"/>
<dbReference type="EMDB" id="EMD-12870"/>
<dbReference type="EMDB" id="EMD-12871"/>
<dbReference type="EMDB" id="EMD-12872"/>
<dbReference type="EMDB" id="EMD-12877"/>
<dbReference type="EMDB" id="EMD-12919"/>
<dbReference type="EMDB" id="EMD-12920"/>
<dbReference type="EMDB" id="EMD-12921"/>
<dbReference type="EMDB" id="EMD-12922"/>
<dbReference type="EMDB" id="EMD-12923"/>
<dbReference type="EMDB" id="EMD-12924"/>
<dbReference type="EMDB" id="EMD-12925"/>
<dbReference type="EMDB" id="EMD-12926"/>
<dbReference type="EMDB" id="EMD-12927"/>
<dbReference type="EMDB" id="EMD-13329"/>
<dbReference type="EMDB" id="EMD-13562"/>
<dbReference type="EMDB" id="EMD-13980"/>
<dbReference type="EMDB" id="EMD-13981"/>
<dbReference type="EMDB" id="EMD-13982"/>
<dbReference type="EMDB" id="EMD-15544"/>
<dbReference type="EMDB" id="EMD-16897"/>
<dbReference type="EMDB" id="EMD-16899"/>
<dbReference type="EMDB" id="EMD-17719"/>
<dbReference type="EMDB" id="EMD-19460"/>
<dbReference type="EMDB" id="EMD-21233"/>
<dbReference type="EMDB" id="EMD-21242"/>
<dbReference type="EMDB" id="EMD-23096"/>
<dbReference type="EMDB" id="EMD-23121"/>
<dbReference type="EMDB" id="EMD-36836"/>
<dbReference type="EMDB" id="EMD-36837"/>
<dbReference type="EMDB" id="EMD-3842"/>
<dbReference type="EMDB" id="EMD-3843"/>
<dbReference type="EMDB" id="EMD-38632"/>
<dbReference type="EMDB" id="EMD-38633"/>
<dbReference type="EMDB" id="EMD-38634"/>
<dbReference type="EMDB" id="EMD-38635"/>
<dbReference type="EMDB" id="EMD-4434"/>
<dbReference type="SMR" id="Q96EL3"/>
<dbReference type="BioGRID" id="125521">
    <property type="interactions" value="204"/>
</dbReference>
<dbReference type="ComplexPortal" id="CPX-5226">
    <property type="entry name" value="39S mitochondrial large ribosomal subunit"/>
</dbReference>
<dbReference type="CORUM" id="Q96EL3"/>
<dbReference type="FunCoup" id="Q96EL3">
    <property type="interactions" value="827"/>
</dbReference>
<dbReference type="IntAct" id="Q96EL3">
    <property type="interactions" value="101"/>
</dbReference>
<dbReference type="MINT" id="Q96EL3"/>
<dbReference type="STRING" id="9606.ENSP00000258105"/>
<dbReference type="iPTMnet" id="Q96EL3"/>
<dbReference type="PhosphoSitePlus" id="Q96EL3"/>
<dbReference type="SwissPalm" id="Q96EL3"/>
<dbReference type="BioMuta" id="MRPL53"/>
<dbReference type="DMDM" id="74731579"/>
<dbReference type="jPOST" id="Q96EL3"/>
<dbReference type="MassIVE" id="Q96EL3"/>
<dbReference type="PaxDb" id="9606-ENSP00000258105"/>
<dbReference type="PeptideAtlas" id="Q96EL3"/>
<dbReference type="ProteomicsDB" id="76424"/>
<dbReference type="Pumba" id="Q96EL3"/>
<dbReference type="TopDownProteomics" id="Q96EL3"/>
<dbReference type="Antibodypedia" id="70616">
    <property type="antibodies" value="46 antibodies from 14 providers"/>
</dbReference>
<dbReference type="DNASU" id="116540"/>
<dbReference type="Ensembl" id="ENST00000258105.8">
    <property type="protein sequence ID" value="ENSP00000258105.7"/>
    <property type="gene ID" value="ENSG00000204822.7"/>
</dbReference>
<dbReference type="GeneID" id="116540"/>
<dbReference type="KEGG" id="hsa:116540"/>
<dbReference type="MANE-Select" id="ENST00000258105.8">
    <property type="protein sequence ID" value="ENSP00000258105.7"/>
    <property type="RefSeq nucleotide sequence ID" value="NM_053050.5"/>
    <property type="RefSeq protein sequence ID" value="NP_444278.1"/>
</dbReference>
<dbReference type="UCSC" id="uc002sln.4">
    <property type="organism name" value="human"/>
</dbReference>
<dbReference type="AGR" id="HGNC:16684"/>
<dbReference type="CTD" id="116540"/>
<dbReference type="DisGeNET" id="116540"/>
<dbReference type="GeneCards" id="MRPL53"/>
<dbReference type="HGNC" id="HGNC:16684">
    <property type="gene designation" value="MRPL53"/>
</dbReference>
<dbReference type="HPA" id="ENSG00000204822">
    <property type="expression patterns" value="Low tissue specificity"/>
</dbReference>
<dbReference type="MIM" id="611857">
    <property type="type" value="gene"/>
</dbReference>
<dbReference type="neXtProt" id="NX_Q96EL3"/>
<dbReference type="PharmGKB" id="PA30986"/>
<dbReference type="VEuPathDB" id="HostDB:ENSG00000204822"/>
<dbReference type="eggNOG" id="ENOG502S5X4">
    <property type="taxonomic scope" value="Eukaryota"/>
</dbReference>
<dbReference type="GeneTree" id="ENSGT00390000001440"/>
<dbReference type="HOGENOM" id="CLU_175193_0_0_1"/>
<dbReference type="InParanoid" id="Q96EL3"/>
<dbReference type="OMA" id="CKMWERI"/>
<dbReference type="OrthoDB" id="6618793at2759"/>
<dbReference type="PAN-GO" id="Q96EL3">
    <property type="GO annotations" value="1 GO annotation based on evolutionary models"/>
</dbReference>
<dbReference type="PhylomeDB" id="Q96EL3"/>
<dbReference type="TreeFam" id="TF300292"/>
<dbReference type="PathwayCommons" id="Q96EL3"/>
<dbReference type="Reactome" id="R-HSA-5368286">
    <property type="pathway name" value="Mitochondrial translation initiation"/>
</dbReference>
<dbReference type="Reactome" id="R-HSA-5389840">
    <property type="pathway name" value="Mitochondrial translation elongation"/>
</dbReference>
<dbReference type="Reactome" id="R-HSA-5419276">
    <property type="pathway name" value="Mitochondrial translation termination"/>
</dbReference>
<dbReference type="SignaLink" id="Q96EL3"/>
<dbReference type="SIGNOR" id="Q96EL3"/>
<dbReference type="BioGRID-ORCS" id="116540">
    <property type="hits" value="521 hits in 1162 CRISPR screens"/>
</dbReference>
<dbReference type="ChiTaRS" id="MRPL53">
    <property type="organism name" value="human"/>
</dbReference>
<dbReference type="EvolutionaryTrace" id="Q96EL3"/>
<dbReference type="GenomeRNAi" id="116540"/>
<dbReference type="Pharos" id="Q96EL3">
    <property type="development level" value="Tdark"/>
</dbReference>
<dbReference type="PRO" id="PR:Q96EL3"/>
<dbReference type="Proteomes" id="UP000005640">
    <property type="component" value="Chromosome 2"/>
</dbReference>
<dbReference type="RNAct" id="Q96EL3">
    <property type="molecule type" value="protein"/>
</dbReference>
<dbReference type="Bgee" id="ENSG00000204822">
    <property type="expression patterns" value="Expressed in right adrenal gland and 98 other cell types or tissues"/>
</dbReference>
<dbReference type="ExpressionAtlas" id="Q96EL3">
    <property type="expression patterns" value="baseline and differential"/>
</dbReference>
<dbReference type="GO" id="GO:0005743">
    <property type="term" value="C:mitochondrial inner membrane"/>
    <property type="evidence" value="ECO:0000304"/>
    <property type="project" value="Reactome"/>
</dbReference>
<dbReference type="GO" id="GO:0005762">
    <property type="term" value="C:mitochondrial large ribosomal subunit"/>
    <property type="evidence" value="ECO:0000314"/>
    <property type="project" value="UniProtKB"/>
</dbReference>
<dbReference type="GO" id="GO:0005739">
    <property type="term" value="C:mitochondrion"/>
    <property type="evidence" value="ECO:0000314"/>
    <property type="project" value="UniProtKB"/>
</dbReference>
<dbReference type="GO" id="GO:0032543">
    <property type="term" value="P:mitochondrial translation"/>
    <property type="evidence" value="ECO:0000303"/>
    <property type="project" value="ComplexPortal"/>
</dbReference>
<dbReference type="FunFam" id="3.40.30.10:FF:000215">
    <property type="entry name" value="39S ribosomal protein L53, mitochondrial"/>
    <property type="match status" value="1"/>
</dbReference>
<dbReference type="Gene3D" id="3.40.30.10">
    <property type="entry name" value="Glutaredoxin"/>
    <property type="match status" value="1"/>
</dbReference>
<dbReference type="InterPro" id="IPR052473">
    <property type="entry name" value="mtLSU_mL53"/>
</dbReference>
<dbReference type="InterPro" id="IPR019716">
    <property type="entry name" value="Ribosomal_mL53"/>
</dbReference>
<dbReference type="PANTHER" id="PTHR33618">
    <property type="entry name" value="39S RIBOSOMAL PROTEIN L53, MITOCHONDRIAL"/>
    <property type="match status" value="1"/>
</dbReference>
<dbReference type="PANTHER" id="PTHR33618:SF1">
    <property type="entry name" value="LARGE RIBOSOMAL SUBUNIT PROTEIN ML53"/>
    <property type="match status" value="1"/>
</dbReference>
<dbReference type="Pfam" id="PF10780">
    <property type="entry name" value="MRP_L53"/>
    <property type="match status" value="1"/>
</dbReference>
<proteinExistence type="evidence at protein level"/>
<gene>
    <name type="primary">MRPL53</name>
</gene>
<comment type="subunit">
    <text evidence="2 3 4">Component of the mitochondrial large ribosomal subunit (mt-LSU) (PubMed:25278503, PubMed:25838379, PubMed:28892042). Mature mammalian 55S mitochondrial ribosomes consist of a small (28S) and a large (39S) subunit. The 28S small subunit contains a 12S ribosomal RNA (12S mt-rRNA) and 30 different proteins. The 39S large subunit contains a 16S rRNA (16S mt-rRNA), a copy of mitochondrial valine transfer RNA (mt-tRNA(Val)), which plays an integral structural role, and 52 different proteins. mL53 is located at the L7/L12 stalk.</text>
</comment>
<comment type="interaction">
    <interactant intactId="EBI-2513715">
        <id>Q96EL3</id>
    </interactant>
    <interactant intactId="EBI-17439331">
        <id>Q8N6D5</id>
        <label>ANKRD29</label>
    </interactant>
    <organismsDiffer>false</organismsDiffer>
    <experiments>3</experiments>
</comment>
<comment type="interaction">
    <interactant intactId="EBI-2513715">
        <id>Q96EL3</id>
    </interactant>
    <interactant intactId="EBI-301238">
        <id>Q15370</id>
        <label>ELOB</label>
    </interactant>
    <organismsDiffer>false</organismsDiffer>
    <experiments>5</experiments>
</comment>
<comment type="interaction">
    <interactant intactId="EBI-2513715">
        <id>Q96EL3</id>
    </interactant>
    <interactant intactId="EBI-23705910">
        <id>A0A0B4J2D5</id>
        <label>GATD3B</label>
    </interactant>
    <organismsDiffer>false</organismsDiffer>
    <experiments>3</experiments>
</comment>
<comment type="interaction">
    <interactant intactId="EBI-2513715">
        <id>Q96EL3</id>
    </interactant>
    <interactant intactId="EBI-19954058">
        <id>O15499</id>
        <label>GSC2</label>
    </interactant>
    <organismsDiffer>false</organismsDiffer>
    <experiments>3</experiments>
</comment>
<comment type="interaction">
    <interactant intactId="EBI-2513715">
        <id>Q96EL3</id>
    </interactant>
    <interactant intactId="EBI-351590">
        <id>P31943</id>
        <label>HNRNPH1</label>
    </interactant>
    <organismsDiffer>false</organismsDiffer>
    <experiments>4</experiments>
</comment>
<comment type="interaction">
    <interactant intactId="EBI-2513715">
        <id>Q96EL3</id>
    </interactant>
    <interactant intactId="EBI-747204">
        <id>Q9UKT9</id>
        <label>IKZF3</label>
    </interactant>
    <organismsDiffer>false</organismsDiffer>
    <experiments>3</experiments>
</comment>
<comment type="interaction">
    <interactant intactId="EBI-2513715">
        <id>Q96EL3</id>
    </interactant>
    <interactant intactId="EBI-2692369">
        <id>O00139</id>
        <label>KIF2A</label>
    </interactant>
    <organismsDiffer>false</organismsDiffer>
    <experiments>3</experiments>
</comment>
<comment type="interaction">
    <interactant intactId="EBI-2513715">
        <id>Q96EL3</id>
    </interactant>
    <interactant intactId="EBI-12197879">
        <id>O00139-1</id>
        <label>KIF2A</label>
    </interactant>
    <organismsDiffer>false</organismsDiffer>
    <experiments>3</experiments>
</comment>
<comment type="interaction">
    <interactant intactId="EBI-2513715">
        <id>Q96EL3</id>
    </interactant>
    <interactant intactId="EBI-10271199">
        <id>Q8NI38</id>
        <label>NFKBID</label>
    </interactant>
    <organismsDiffer>false</organismsDiffer>
    <experiments>3</experiments>
</comment>
<comment type="interaction">
    <interactant intactId="EBI-2513715">
        <id>Q96EL3</id>
    </interactant>
    <interactant intactId="EBI-747278">
        <id>P26367</id>
        <label>PAX6</label>
    </interactant>
    <organismsDiffer>false</organismsDiffer>
    <experiments>3</experiments>
</comment>
<comment type="interaction">
    <interactant intactId="EBI-2513715">
        <id>Q96EL3</id>
    </interactant>
    <interactant intactId="EBI-358436">
        <id>Q12824-2</id>
        <label>SMARCB1</label>
    </interactant>
    <organismsDiffer>false</organismsDiffer>
    <experiments>3</experiments>
</comment>
<comment type="interaction">
    <interactant intactId="EBI-2513715">
        <id>Q96EL3</id>
    </interactant>
    <interactant intactId="EBI-2212028">
        <id>Q9Y2D8</id>
        <label>SSX2IP</label>
    </interactant>
    <organismsDiffer>false</organismsDiffer>
    <experiments>3</experiments>
</comment>
<comment type="interaction">
    <interactant intactId="EBI-2513715">
        <id>Q96EL3</id>
    </interactant>
    <interactant intactId="EBI-529518">
        <id>Q86VP1</id>
        <label>TAX1BP1</label>
    </interactant>
    <organismsDiffer>false</organismsDiffer>
    <experiments>3</experiments>
</comment>
<comment type="interaction">
    <interactant intactId="EBI-2513715">
        <id>Q96EL3</id>
    </interactant>
    <interactant intactId="EBI-741515">
        <id>Q9NVV9</id>
        <label>THAP1</label>
    </interactant>
    <organismsDiffer>false</organismsDiffer>
    <experiments>3</experiments>
</comment>
<comment type="subcellular location">
    <subcellularLocation>
        <location evidence="2 3 4">Mitochondrion</location>
    </subcellularLocation>
</comment>
<comment type="similarity">
    <text evidence="6">Belongs to the mitochondrion-specific ribosomal protein mL53 family.</text>
</comment>
<sequence length="112" mass="12107">MAAALARLGLRPVKQVRVQFCPFEKNVESTRTFLQTVSSEKVRSTNLNCSVIADVRHDGSEPCVDVLFGDGHRLIMRGAHLTALEMLTAFASHIRARDAAGSGDKPGADTGR</sequence>